<sequence>MLGGLAKAIFGSSNDRYVKSLRPILQKIAGFEPTLEAMNDEELAAQTVKFRQRLDAGETLDSLLPEAFATVREAARRVLGQRHYDVQMIGGIVLHRGEIAEMRTGEGKTLVATLAVYLNALPGEGVHVVTVNDYLATRDAEWMGRVYRFLGLTVGVIVPNLSDQERRDAYGADITYGTNNEFGFDYLRDNMKYDRALMVHRPFNFAVVDEVDSVLIDEARTPLIISGPTDDKSELYMQVDAIVKQVTKDDYEFDEKQRSVVLTEDGTERIERLLEAAGLLEGGNLYAYENTQVVHHLNQALRANVAFKRDTDYIVKDEKIIIIDEFTGRMMDGRRWSDGLHQAVEAKEGVKIEPENQTLASITFQNYFRMYPKLGGMTGTAATEAHEFYQIYKMNVVTIPTNLPVKRIDQDDEFYKNMLDKFAAITQAIREAKERGQPVLVGTVSIEKSELLSEFLTKEKVEHKVLNARYHEQEAHIVAQAGRLGAVTIATNMAGRGTDIQLGGNLEFRMLDEHPALEIGTPEFDAAAERIRGEIIAEKEAVLAAGGLFVLGTERHESRRIDNQLRGRSGRQGDPGLSRFYLSLDDDLLRIFGPQTMFARMMNKNLADGEAIVSPWISKAIETAQKKVEARNYDIRKQVVEYDDVMNDQRKVIYEQRADIMDAETVDDVVTDMRADTANAIVGGCCPPHSYPEQWDVDTLKLRSAETLGITPPFDEWIEQDGIDPEILAEKVLAEADAVIAAKRATIDDQSWHGIEKSVLLQTLDHHWKEHLATLDALRQVIHLRAYAQKTPINEYKHEAFALFERMLVAIREEVTRVLAHVRFEMAPQDYAELPPMPDFVTEHVNALTGEDNSGDRDGGTLGIIGSRVPQAIAAPAGDDFEITPEIAATLGRNSLCPCGSGRKYKHCHGAL</sequence>
<accession>A5V9S7</accession>
<proteinExistence type="inferred from homology"/>
<organism>
    <name type="scientific">Rhizorhabdus wittichii (strain DSM 6014 / CCUG 31198 / JCM 15750 / NBRC 105917 / EY 4224 / RW1)</name>
    <name type="common">Sphingomonas wittichii</name>
    <dbReference type="NCBI Taxonomy" id="392499"/>
    <lineage>
        <taxon>Bacteria</taxon>
        <taxon>Pseudomonadati</taxon>
        <taxon>Pseudomonadota</taxon>
        <taxon>Alphaproteobacteria</taxon>
        <taxon>Sphingomonadales</taxon>
        <taxon>Sphingomonadaceae</taxon>
        <taxon>Rhizorhabdus</taxon>
    </lineage>
</organism>
<evidence type="ECO:0000255" key="1">
    <source>
        <dbReference type="HAMAP-Rule" id="MF_01382"/>
    </source>
</evidence>
<keyword id="KW-0067">ATP-binding</keyword>
<keyword id="KW-0997">Cell inner membrane</keyword>
<keyword id="KW-1003">Cell membrane</keyword>
<keyword id="KW-0963">Cytoplasm</keyword>
<keyword id="KW-0472">Membrane</keyword>
<keyword id="KW-0479">Metal-binding</keyword>
<keyword id="KW-0547">Nucleotide-binding</keyword>
<keyword id="KW-0653">Protein transport</keyword>
<keyword id="KW-1185">Reference proteome</keyword>
<keyword id="KW-1278">Translocase</keyword>
<keyword id="KW-0811">Translocation</keyword>
<keyword id="KW-0813">Transport</keyword>
<keyword id="KW-0862">Zinc</keyword>
<dbReference type="EC" id="7.4.2.8" evidence="1"/>
<dbReference type="EMBL" id="CP000699">
    <property type="protein sequence ID" value="ABQ69043.1"/>
    <property type="molecule type" value="Genomic_DNA"/>
</dbReference>
<dbReference type="SMR" id="A5V9S7"/>
<dbReference type="STRING" id="392499.Swit_2687"/>
<dbReference type="PaxDb" id="392499-Swit_2687"/>
<dbReference type="KEGG" id="swi:Swit_2687"/>
<dbReference type="eggNOG" id="COG0653">
    <property type="taxonomic scope" value="Bacteria"/>
</dbReference>
<dbReference type="HOGENOM" id="CLU_005314_3_0_5"/>
<dbReference type="OrthoDB" id="9805579at2"/>
<dbReference type="Proteomes" id="UP000001989">
    <property type="component" value="Chromosome"/>
</dbReference>
<dbReference type="GO" id="GO:0031522">
    <property type="term" value="C:cell envelope Sec protein transport complex"/>
    <property type="evidence" value="ECO:0007669"/>
    <property type="project" value="TreeGrafter"/>
</dbReference>
<dbReference type="GO" id="GO:0005829">
    <property type="term" value="C:cytosol"/>
    <property type="evidence" value="ECO:0007669"/>
    <property type="project" value="TreeGrafter"/>
</dbReference>
<dbReference type="GO" id="GO:0005886">
    <property type="term" value="C:plasma membrane"/>
    <property type="evidence" value="ECO:0007669"/>
    <property type="project" value="UniProtKB-SubCell"/>
</dbReference>
<dbReference type="GO" id="GO:0005524">
    <property type="term" value="F:ATP binding"/>
    <property type="evidence" value="ECO:0007669"/>
    <property type="project" value="UniProtKB-UniRule"/>
</dbReference>
<dbReference type="GO" id="GO:0046872">
    <property type="term" value="F:metal ion binding"/>
    <property type="evidence" value="ECO:0007669"/>
    <property type="project" value="UniProtKB-KW"/>
</dbReference>
<dbReference type="GO" id="GO:0008564">
    <property type="term" value="F:protein-exporting ATPase activity"/>
    <property type="evidence" value="ECO:0007669"/>
    <property type="project" value="UniProtKB-EC"/>
</dbReference>
<dbReference type="GO" id="GO:0065002">
    <property type="term" value="P:intracellular protein transmembrane transport"/>
    <property type="evidence" value="ECO:0007669"/>
    <property type="project" value="UniProtKB-UniRule"/>
</dbReference>
<dbReference type="GO" id="GO:0017038">
    <property type="term" value="P:protein import"/>
    <property type="evidence" value="ECO:0007669"/>
    <property type="project" value="InterPro"/>
</dbReference>
<dbReference type="GO" id="GO:0006605">
    <property type="term" value="P:protein targeting"/>
    <property type="evidence" value="ECO:0007669"/>
    <property type="project" value="UniProtKB-UniRule"/>
</dbReference>
<dbReference type="GO" id="GO:0043952">
    <property type="term" value="P:protein transport by the Sec complex"/>
    <property type="evidence" value="ECO:0007669"/>
    <property type="project" value="TreeGrafter"/>
</dbReference>
<dbReference type="CDD" id="cd17928">
    <property type="entry name" value="DEXDc_SecA"/>
    <property type="match status" value="1"/>
</dbReference>
<dbReference type="CDD" id="cd18803">
    <property type="entry name" value="SF2_C_secA"/>
    <property type="match status" value="1"/>
</dbReference>
<dbReference type="FunFam" id="3.40.50.300:FF:000113">
    <property type="entry name" value="Preprotein translocase subunit SecA"/>
    <property type="match status" value="1"/>
</dbReference>
<dbReference type="FunFam" id="3.90.1440.10:FF:000001">
    <property type="entry name" value="Preprotein translocase subunit SecA"/>
    <property type="match status" value="1"/>
</dbReference>
<dbReference type="FunFam" id="1.10.3060.10:FF:000003">
    <property type="entry name" value="Protein translocase subunit SecA"/>
    <property type="match status" value="1"/>
</dbReference>
<dbReference type="FunFam" id="3.40.50.300:FF:000334">
    <property type="entry name" value="Protein translocase subunit SecA"/>
    <property type="match status" value="1"/>
</dbReference>
<dbReference type="Gene3D" id="3.10.450.50">
    <property type="match status" value="1"/>
</dbReference>
<dbReference type="Gene3D" id="1.10.3060.10">
    <property type="entry name" value="Helical scaffold and wing domains of SecA"/>
    <property type="match status" value="1"/>
</dbReference>
<dbReference type="Gene3D" id="3.40.50.300">
    <property type="entry name" value="P-loop containing nucleotide triphosphate hydrolases"/>
    <property type="match status" value="2"/>
</dbReference>
<dbReference type="Gene3D" id="3.90.1440.10">
    <property type="entry name" value="SecA, preprotein cross-linking domain"/>
    <property type="match status" value="1"/>
</dbReference>
<dbReference type="HAMAP" id="MF_01382">
    <property type="entry name" value="SecA"/>
    <property type="match status" value="1"/>
</dbReference>
<dbReference type="InterPro" id="IPR014001">
    <property type="entry name" value="Helicase_ATP-bd"/>
</dbReference>
<dbReference type="InterPro" id="IPR001650">
    <property type="entry name" value="Helicase_C-like"/>
</dbReference>
<dbReference type="InterPro" id="IPR027417">
    <property type="entry name" value="P-loop_NTPase"/>
</dbReference>
<dbReference type="InterPro" id="IPR004027">
    <property type="entry name" value="SEC_C_motif"/>
</dbReference>
<dbReference type="InterPro" id="IPR000185">
    <property type="entry name" value="SecA"/>
</dbReference>
<dbReference type="InterPro" id="IPR020937">
    <property type="entry name" value="SecA_CS"/>
</dbReference>
<dbReference type="InterPro" id="IPR011115">
    <property type="entry name" value="SecA_DEAD"/>
</dbReference>
<dbReference type="InterPro" id="IPR014018">
    <property type="entry name" value="SecA_motor_DEAD"/>
</dbReference>
<dbReference type="InterPro" id="IPR011130">
    <property type="entry name" value="SecA_preprotein_X-link_dom"/>
</dbReference>
<dbReference type="InterPro" id="IPR044722">
    <property type="entry name" value="SecA_SF2_C"/>
</dbReference>
<dbReference type="InterPro" id="IPR011116">
    <property type="entry name" value="SecA_Wing/Scaffold"/>
</dbReference>
<dbReference type="InterPro" id="IPR036266">
    <property type="entry name" value="SecA_Wing/Scaffold_sf"/>
</dbReference>
<dbReference type="InterPro" id="IPR036670">
    <property type="entry name" value="SecA_X-link_sf"/>
</dbReference>
<dbReference type="NCBIfam" id="NF009538">
    <property type="entry name" value="PRK12904.1"/>
    <property type="match status" value="1"/>
</dbReference>
<dbReference type="NCBIfam" id="TIGR00963">
    <property type="entry name" value="secA"/>
    <property type="match status" value="1"/>
</dbReference>
<dbReference type="PANTHER" id="PTHR30612:SF0">
    <property type="entry name" value="CHLOROPLAST PROTEIN-TRANSPORTING ATPASE"/>
    <property type="match status" value="1"/>
</dbReference>
<dbReference type="PANTHER" id="PTHR30612">
    <property type="entry name" value="SECA INNER MEMBRANE COMPONENT OF SEC PROTEIN SECRETION SYSTEM"/>
    <property type="match status" value="1"/>
</dbReference>
<dbReference type="Pfam" id="PF21090">
    <property type="entry name" value="P-loop_SecA"/>
    <property type="match status" value="1"/>
</dbReference>
<dbReference type="Pfam" id="PF02810">
    <property type="entry name" value="SEC-C"/>
    <property type="match status" value="1"/>
</dbReference>
<dbReference type="Pfam" id="PF07517">
    <property type="entry name" value="SecA_DEAD"/>
    <property type="match status" value="1"/>
</dbReference>
<dbReference type="Pfam" id="PF01043">
    <property type="entry name" value="SecA_PP_bind"/>
    <property type="match status" value="1"/>
</dbReference>
<dbReference type="Pfam" id="PF07516">
    <property type="entry name" value="SecA_SW"/>
    <property type="match status" value="1"/>
</dbReference>
<dbReference type="PRINTS" id="PR00906">
    <property type="entry name" value="SECA"/>
</dbReference>
<dbReference type="SMART" id="SM00957">
    <property type="entry name" value="SecA_DEAD"/>
    <property type="match status" value="1"/>
</dbReference>
<dbReference type="SMART" id="SM00958">
    <property type="entry name" value="SecA_PP_bind"/>
    <property type="match status" value="1"/>
</dbReference>
<dbReference type="SUPFAM" id="SSF81886">
    <property type="entry name" value="Helical scaffold and wing domains of SecA"/>
    <property type="match status" value="1"/>
</dbReference>
<dbReference type="SUPFAM" id="SSF52540">
    <property type="entry name" value="P-loop containing nucleoside triphosphate hydrolases"/>
    <property type="match status" value="2"/>
</dbReference>
<dbReference type="SUPFAM" id="SSF81767">
    <property type="entry name" value="Pre-protein crosslinking domain of SecA"/>
    <property type="match status" value="1"/>
</dbReference>
<dbReference type="PROSITE" id="PS01312">
    <property type="entry name" value="SECA"/>
    <property type="match status" value="1"/>
</dbReference>
<dbReference type="PROSITE" id="PS51196">
    <property type="entry name" value="SECA_MOTOR_DEAD"/>
    <property type="match status" value="1"/>
</dbReference>
<feature type="chain" id="PRO_0000321010" description="Protein translocase subunit SecA">
    <location>
        <begin position="1"/>
        <end position="912"/>
    </location>
</feature>
<feature type="binding site" evidence="1">
    <location>
        <position position="87"/>
    </location>
    <ligand>
        <name>ATP</name>
        <dbReference type="ChEBI" id="CHEBI:30616"/>
    </ligand>
</feature>
<feature type="binding site" evidence="1">
    <location>
        <begin position="105"/>
        <end position="109"/>
    </location>
    <ligand>
        <name>ATP</name>
        <dbReference type="ChEBI" id="CHEBI:30616"/>
    </ligand>
</feature>
<feature type="binding site" evidence="1">
    <location>
        <position position="499"/>
    </location>
    <ligand>
        <name>ATP</name>
        <dbReference type="ChEBI" id="CHEBI:30616"/>
    </ligand>
</feature>
<feature type="binding site" evidence="1">
    <location>
        <position position="897"/>
    </location>
    <ligand>
        <name>Zn(2+)</name>
        <dbReference type="ChEBI" id="CHEBI:29105"/>
    </ligand>
</feature>
<feature type="binding site" evidence="1">
    <location>
        <position position="899"/>
    </location>
    <ligand>
        <name>Zn(2+)</name>
        <dbReference type="ChEBI" id="CHEBI:29105"/>
    </ligand>
</feature>
<feature type="binding site" evidence="1">
    <location>
        <position position="908"/>
    </location>
    <ligand>
        <name>Zn(2+)</name>
        <dbReference type="ChEBI" id="CHEBI:29105"/>
    </ligand>
</feature>
<feature type="binding site" evidence="1">
    <location>
        <position position="909"/>
    </location>
    <ligand>
        <name>Zn(2+)</name>
        <dbReference type="ChEBI" id="CHEBI:29105"/>
    </ligand>
</feature>
<name>SECA_RHIWR</name>
<gene>
    <name evidence="1" type="primary">secA</name>
    <name type="ordered locus">Swit_2687</name>
</gene>
<reference key="1">
    <citation type="journal article" date="2010" name="J. Bacteriol.">
        <title>Genome sequence of the dioxin-mineralizing bacterium Sphingomonas wittichii RW1.</title>
        <authorList>
            <person name="Miller T.R."/>
            <person name="Delcher A.L."/>
            <person name="Salzberg S.L."/>
            <person name="Saunders E."/>
            <person name="Detter J.C."/>
            <person name="Halden R.U."/>
        </authorList>
    </citation>
    <scope>NUCLEOTIDE SEQUENCE [LARGE SCALE GENOMIC DNA]</scope>
    <source>
        <strain>DSM 6014 / CCUG 31198 / JCM 15750 / NBRC 105917 / EY 4224 / RW1</strain>
    </source>
</reference>
<protein>
    <recommendedName>
        <fullName evidence="1">Protein translocase subunit SecA</fullName>
        <ecNumber evidence="1">7.4.2.8</ecNumber>
    </recommendedName>
</protein>
<comment type="function">
    <text evidence="1">Part of the Sec protein translocase complex. Interacts with the SecYEG preprotein conducting channel. Has a central role in coupling the hydrolysis of ATP to the transfer of proteins into and across the cell membrane, serving both as a receptor for the preprotein-SecB complex and as an ATP-driven molecular motor driving the stepwise translocation of polypeptide chains across the membrane.</text>
</comment>
<comment type="catalytic activity">
    <reaction evidence="1">
        <text>ATP + H2O + cellular proteinSide 1 = ADP + phosphate + cellular proteinSide 2.</text>
        <dbReference type="EC" id="7.4.2.8"/>
    </reaction>
</comment>
<comment type="cofactor">
    <cofactor evidence="1">
        <name>Zn(2+)</name>
        <dbReference type="ChEBI" id="CHEBI:29105"/>
    </cofactor>
    <text evidence="1">May bind 1 zinc ion per subunit.</text>
</comment>
<comment type="subunit">
    <text evidence="1">Monomer and homodimer. Part of the essential Sec protein translocation apparatus which comprises SecA, SecYEG and auxiliary proteins SecDF-YajC and YidC.</text>
</comment>
<comment type="subcellular location">
    <subcellularLocation>
        <location evidence="1">Cell inner membrane</location>
        <topology evidence="1">Peripheral membrane protein</topology>
        <orientation evidence="1">Cytoplasmic side</orientation>
    </subcellularLocation>
    <subcellularLocation>
        <location evidence="1">Cytoplasm</location>
    </subcellularLocation>
    <text evidence="1">Distribution is 50-50.</text>
</comment>
<comment type="similarity">
    <text evidence="1">Belongs to the SecA family.</text>
</comment>